<gene>
    <name type="primary">ST7</name>
</gene>
<proteinExistence type="inferred from homology"/>
<keyword id="KW-0325">Glycoprotein</keyword>
<keyword id="KW-0472">Membrane</keyword>
<keyword id="KW-0597">Phosphoprotein</keyword>
<keyword id="KW-0812">Transmembrane</keyword>
<keyword id="KW-1133">Transmembrane helix</keyword>
<evidence type="ECO:0000250" key="1">
    <source>
        <dbReference type="UniProtKB" id="Q9NRC1"/>
    </source>
</evidence>
<evidence type="ECO:0000255" key="2"/>
<evidence type="ECO:0000305" key="3"/>
<accession>Q2QLB7</accession>
<name>ST7_PLEMO</name>
<reference key="1">
    <citation type="submission" date="2005-11" db="EMBL/GenBank/DDBJ databases">
        <title>NISC comparative sequencing initiative.</title>
        <authorList>
            <person name="Antonellis A."/>
            <person name="Ayele K."/>
            <person name="Benjamin B."/>
            <person name="Blakesley R.W."/>
            <person name="Boakye A."/>
            <person name="Bouffard G.G."/>
            <person name="Brinkley C."/>
            <person name="Brooks S."/>
            <person name="Chu G."/>
            <person name="Coleman H."/>
            <person name="Engle J."/>
            <person name="Gestole M."/>
            <person name="Greene A."/>
            <person name="Guan X."/>
            <person name="Gupta J."/>
            <person name="Haghighi P."/>
            <person name="Han J."/>
            <person name="Hansen N."/>
            <person name="Ho S.-L."/>
            <person name="Hu P."/>
            <person name="Hunter G."/>
            <person name="Hurle B."/>
            <person name="Idol J.R."/>
            <person name="Kwong P."/>
            <person name="Laric P."/>
            <person name="Larson S."/>
            <person name="Lee-Lin S.-Q."/>
            <person name="Legaspi R."/>
            <person name="Madden M."/>
            <person name="Maduro Q.L."/>
            <person name="Maduro V.B."/>
            <person name="Margulies E.H."/>
            <person name="Masiello C."/>
            <person name="Maskeri B."/>
            <person name="McDowell J."/>
            <person name="Mojidi H.A."/>
            <person name="Mullikin J.C."/>
            <person name="Oestreicher J.S."/>
            <person name="Park M."/>
            <person name="Portnoy M.E."/>
            <person name="Prasad A."/>
            <person name="Puri O."/>
            <person name="Reddix-Dugue N."/>
            <person name="Schandler K."/>
            <person name="Schueler M.G."/>
            <person name="Sison C."/>
            <person name="Stantripop S."/>
            <person name="Stephen E."/>
            <person name="Taye A."/>
            <person name="Thomas J.W."/>
            <person name="Thomas P.J."/>
            <person name="Tsipouri V."/>
            <person name="Ung L."/>
            <person name="Vogt J.L."/>
            <person name="Wetherby K.D."/>
            <person name="Young A."/>
            <person name="Green E.D."/>
        </authorList>
    </citation>
    <scope>NUCLEOTIDE SEQUENCE [LARGE SCALE GENOMIC DNA]</scope>
</reference>
<sequence length="585" mass="67152">MAEAGTGFLEQLKSCIVWSWTYLWTVWFFIVLFLVYILRVPLKINDNLSTVSMFLNTLTPKFYVALTGTSSLISGLILIFEWWYFRKYGTSFIEQVSVSHLRPLLGGVDNNSSNNSNSSNGDSDSNRQSVSECKVWRNPLNLFRGAEYNRYTWVTGREPLTYYDMNLSAQDHQTFFTCDSDHLRPADAIMQKAWRERNPQARISAAHEALEINEIRSRVEVPLIASSTIWEIKLLPKCATAYILLAEEEATTIAEAEKLFKQALKAGDGCYRRSQQLQHHGSQYEAQHRRDTNVLVYIKRRLAMCARRLGRTREAVKMMRDLMKEFPLLSMFNIHENLLEALLELQAYADVQAVLAKYDDISLPKSATICYTAALLKARAVSDKFSPEAASRRGLSTAEMNAVEAIHRAVEFNPHVPKYLLEMKSLILPPEHILKRGDSEAIAYAFFHLAHWKRVEGALNLLHCTWEGTFRMIPYPLEKGHLFYPYPICTETADRELLPSFHEVSVYPKKELPFFILFTAGLCSFTAMLALLTHQFPELMGVFAKAMIDIFCSAEFRDWNCKSIFMRVEDELEIPPAPQSQHFQN</sequence>
<feature type="chain" id="PRO_0000339194" description="Suppressor of tumorigenicity 7 protein">
    <location>
        <begin position="1"/>
        <end position="585"/>
    </location>
</feature>
<feature type="transmembrane region" description="Helical" evidence="2">
    <location>
        <begin position="15"/>
        <end position="35"/>
    </location>
</feature>
<feature type="transmembrane region" description="Helical" evidence="2">
    <location>
        <begin position="62"/>
        <end position="82"/>
    </location>
</feature>
<feature type="transmembrane region" description="Helical" evidence="2">
    <location>
        <begin position="512"/>
        <end position="532"/>
    </location>
</feature>
<feature type="modified residue" description="Phosphoserine" evidence="1">
    <location>
        <position position="386"/>
    </location>
</feature>
<feature type="glycosylation site" description="N-linked (GlcNAc...) asparagine" evidence="2">
    <location>
        <position position="47"/>
    </location>
</feature>
<protein>
    <recommendedName>
        <fullName>Suppressor of tumorigenicity 7 protein</fullName>
    </recommendedName>
</protein>
<dbReference type="EMBL" id="DP000019">
    <property type="protein sequence ID" value="ABB89792.1"/>
    <property type="molecule type" value="Genomic_DNA"/>
</dbReference>
<dbReference type="GlyCosmos" id="Q2QLB7">
    <property type="glycosylation" value="1 site, No reported glycans"/>
</dbReference>
<dbReference type="GO" id="GO:0016020">
    <property type="term" value="C:membrane"/>
    <property type="evidence" value="ECO:0007669"/>
    <property type="project" value="UniProtKB-SubCell"/>
</dbReference>
<dbReference type="CDD" id="cd11557">
    <property type="entry name" value="ST7"/>
    <property type="match status" value="1"/>
</dbReference>
<dbReference type="InterPro" id="IPR007311">
    <property type="entry name" value="ST7"/>
</dbReference>
<dbReference type="PANTHER" id="PTHR12745">
    <property type="entry name" value="SUPPRESSION OF TUMORIGENICITY 7"/>
    <property type="match status" value="1"/>
</dbReference>
<dbReference type="PANTHER" id="PTHR12745:SF10">
    <property type="entry name" value="SUPPRESSOR OF TUMORIGENICITY 7 PROTEIN"/>
    <property type="match status" value="1"/>
</dbReference>
<dbReference type="Pfam" id="PF04184">
    <property type="entry name" value="ST7"/>
    <property type="match status" value="1"/>
</dbReference>
<organism>
    <name type="scientific">Plecturocebus moloch</name>
    <name type="common">Dusky titi monkey</name>
    <name type="synonym">Callicebus moloch</name>
    <dbReference type="NCBI Taxonomy" id="9523"/>
    <lineage>
        <taxon>Eukaryota</taxon>
        <taxon>Metazoa</taxon>
        <taxon>Chordata</taxon>
        <taxon>Craniata</taxon>
        <taxon>Vertebrata</taxon>
        <taxon>Euteleostomi</taxon>
        <taxon>Mammalia</taxon>
        <taxon>Eutheria</taxon>
        <taxon>Euarchontoglires</taxon>
        <taxon>Primates</taxon>
        <taxon>Haplorrhini</taxon>
        <taxon>Platyrrhini</taxon>
        <taxon>Pitheciidae</taxon>
        <taxon>Callicebinae</taxon>
        <taxon>Plecturocebus</taxon>
    </lineage>
</organism>
<comment type="subcellular location">
    <subcellularLocation>
        <location evidence="3">Membrane</location>
        <topology evidence="3">Multi-pass membrane protein</topology>
    </subcellularLocation>
</comment>
<comment type="similarity">
    <text evidence="3">Belongs to the ST7 family.</text>
</comment>